<keyword id="KW-0963">Cytoplasm</keyword>
<keyword id="KW-0342">GTP-binding</keyword>
<keyword id="KW-0378">Hydrolase</keyword>
<keyword id="KW-0460">Magnesium</keyword>
<keyword id="KW-0479">Metal-binding</keyword>
<keyword id="KW-0547">Nucleotide-binding</keyword>
<keyword id="KW-1185">Reference proteome</keyword>
<evidence type="ECO:0000255" key="1">
    <source>
        <dbReference type="HAMAP-Rule" id="MF_01454"/>
    </source>
</evidence>
<evidence type="ECO:0000255" key="2">
    <source>
        <dbReference type="PROSITE-ProRule" id="PRU01231"/>
    </source>
</evidence>
<evidence type="ECO:0000256" key="3">
    <source>
        <dbReference type="SAM" id="MobiDB-lite"/>
    </source>
</evidence>
<accession>A7MJF1</accession>
<protein>
    <recommendedName>
        <fullName evidence="1">GTPase Obg</fullName>
        <ecNumber evidence="1">3.6.5.-</ecNumber>
    </recommendedName>
    <alternativeName>
        <fullName evidence="1">GTP-binding protein Obg</fullName>
    </alternativeName>
</protein>
<organism>
    <name type="scientific">Cronobacter sakazakii (strain ATCC BAA-894)</name>
    <name type="common">Enterobacter sakazakii</name>
    <dbReference type="NCBI Taxonomy" id="290339"/>
    <lineage>
        <taxon>Bacteria</taxon>
        <taxon>Pseudomonadati</taxon>
        <taxon>Pseudomonadota</taxon>
        <taxon>Gammaproteobacteria</taxon>
        <taxon>Enterobacterales</taxon>
        <taxon>Enterobacteriaceae</taxon>
        <taxon>Cronobacter</taxon>
    </lineage>
</organism>
<feature type="chain" id="PRO_0000385904" description="GTPase Obg">
    <location>
        <begin position="1"/>
        <end position="390"/>
    </location>
</feature>
<feature type="domain" description="Obg" evidence="2">
    <location>
        <begin position="1"/>
        <end position="159"/>
    </location>
</feature>
<feature type="domain" description="OBG-type G" evidence="1">
    <location>
        <begin position="160"/>
        <end position="333"/>
    </location>
</feature>
<feature type="region of interest" description="Disordered" evidence="3">
    <location>
        <begin position="127"/>
        <end position="146"/>
    </location>
</feature>
<feature type="region of interest" description="Disordered" evidence="3">
    <location>
        <begin position="364"/>
        <end position="390"/>
    </location>
</feature>
<feature type="compositionally biased region" description="Polar residues" evidence="3">
    <location>
        <begin position="129"/>
        <end position="143"/>
    </location>
</feature>
<feature type="compositionally biased region" description="Acidic residues" evidence="3">
    <location>
        <begin position="364"/>
        <end position="384"/>
    </location>
</feature>
<feature type="binding site" evidence="1">
    <location>
        <begin position="166"/>
        <end position="173"/>
    </location>
    <ligand>
        <name>GTP</name>
        <dbReference type="ChEBI" id="CHEBI:37565"/>
    </ligand>
</feature>
<feature type="binding site" evidence="1">
    <location>
        <position position="173"/>
    </location>
    <ligand>
        <name>Mg(2+)</name>
        <dbReference type="ChEBI" id="CHEBI:18420"/>
    </ligand>
</feature>
<feature type="binding site" evidence="1">
    <location>
        <begin position="191"/>
        <end position="195"/>
    </location>
    <ligand>
        <name>GTP</name>
        <dbReference type="ChEBI" id="CHEBI:37565"/>
    </ligand>
</feature>
<feature type="binding site" evidence="1">
    <location>
        <position position="193"/>
    </location>
    <ligand>
        <name>Mg(2+)</name>
        <dbReference type="ChEBI" id="CHEBI:18420"/>
    </ligand>
</feature>
<feature type="binding site" evidence="1">
    <location>
        <begin position="213"/>
        <end position="216"/>
    </location>
    <ligand>
        <name>GTP</name>
        <dbReference type="ChEBI" id="CHEBI:37565"/>
    </ligand>
</feature>
<feature type="binding site" evidence="1">
    <location>
        <begin position="283"/>
        <end position="286"/>
    </location>
    <ligand>
        <name>GTP</name>
        <dbReference type="ChEBI" id="CHEBI:37565"/>
    </ligand>
</feature>
<feature type="binding site" evidence="1">
    <location>
        <begin position="314"/>
        <end position="316"/>
    </location>
    <ligand>
        <name>GTP</name>
        <dbReference type="ChEBI" id="CHEBI:37565"/>
    </ligand>
</feature>
<proteinExistence type="inferred from homology"/>
<comment type="function">
    <text evidence="1">An essential GTPase which binds GTP, GDP and possibly (p)ppGpp with moderate affinity, with high nucleotide exchange rates and a fairly low GTP hydrolysis rate. Plays a role in control of the cell cycle, stress response, ribosome biogenesis and in those bacteria that undergo differentiation, in morphogenesis control.</text>
</comment>
<comment type="cofactor">
    <cofactor evidence="1">
        <name>Mg(2+)</name>
        <dbReference type="ChEBI" id="CHEBI:18420"/>
    </cofactor>
</comment>
<comment type="subunit">
    <text evidence="1">Monomer.</text>
</comment>
<comment type="subcellular location">
    <subcellularLocation>
        <location evidence="1">Cytoplasm</location>
    </subcellularLocation>
</comment>
<comment type="similarity">
    <text evidence="1">Belongs to the TRAFAC class OBG-HflX-like GTPase superfamily. OBG GTPase family.</text>
</comment>
<name>OBG_CROS8</name>
<reference key="1">
    <citation type="journal article" date="2010" name="PLoS ONE">
        <title>Genome sequence of Cronobacter sakazakii BAA-894 and comparative genomic hybridization analysis with other Cronobacter species.</title>
        <authorList>
            <person name="Kucerova E."/>
            <person name="Clifton S.W."/>
            <person name="Xia X.Q."/>
            <person name="Long F."/>
            <person name="Porwollik S."/>
            <person name="Fulton L."/>
            <person name="Fronick C."/>
            <person name="Minx P."/>
            <person name="Kyung K."/>
            <person name="Warren W."/>
            <person name="Fulton R."/>
            <person name="Feng D."/>
            <person name="Wollam A."/>
            <person name="Shah N."/>
            <person name="Bhonagiri V."/>
            <person name="Nash W.E."/>
            <person name="Hallsworth-Pepin K."/>
            <person name="Wilson R.K."/>
            <person name="McClelland M."/>
            <person name="Forsythe S.J."/>
        </authorList>
    </citation>
    <scope>NUCLEOTIDE SEQUENCE [LARGE SCALE GENOMIC DNA]</scope>
    <source>
        <strain>ATCC BAA-894</strain>
    </source>
</reference>
<dbReference type="EC" id="3.6.5.-" evidence="1"/>
<dbReference type="EMBL" id="CP000783">
    <property type="protein sequence ID" value="ABU78787.1"/>
    <property type="molecule type" value="Genomic_DNA"/>
</dbReference>
<dbReference type="SMR" id="A7MJF1"/>
<dbReference type="KEGG" id="esa:ESA_03576"/>
<dbReference type="HOGENOM" id="CLU_011747_2_0_6"/>
<dbReference type="Proteomes" id="UP000000260">
    <property type="component" value="Chromosome"/>
</dbReference>
<dbReference type="GO" id="GO:0005737">
    <property type="term" value="C:cytoplasm"/>
    <property type="evidence" value="ECO:0007669"/>
    <property type="project" value="UniProtKB-SubCell"/>
</dbReference>
<dbReference type="GO" id="GO:0005525">
    <property type="term" value="F:GTP binding"/>
    <property type="evidence" value="ECO:0007669"/>
    <property type="project" value="UniProtKB-UniRule"/>
</dbReference>
<dbReference type="GO" id="GO:0003924">
    <property type="term" value="F:GTPase activity"/>
    <property type="evidence" value="ECO:0007669"/>
    <property type="project" value="UniProtKB-UniRule"/>
</dbReference>
<dbReference type="GO" id="GO:0000287">
    <property type="term" value="F:magnesium ion binding"/>
    <property type="evidence" value="ECO:0007669"/>
    <property type="project" value="InterPro"/>
</dbReference>
<dbReference type="GO" id="GO:0042254">
    <property type="term" value="P:ribosome biogenesis"/>
    <property type="evidence" value="ECO:0007669"/>
    <property type="project" value="UniProtKB-UniRule"/>
</dbReference>
<dbReference type="CDD" id="cd01898">
    <property type="entry name" value="Obg"/>
    <property type="match status" value="1"/>
</dbReference>
<dbReference type="FunFam" id="2.70.210.12:FF:000001">
    <property type="entry name" value="GTPase Obg"/>
    <property type="match status" value="1"/>
</dbReference>
<dbReference type="FunFam" id="3.40.50.300:FF:000185">
    <property type="entry name" value="GTPase Obg"/>
    <property type="match status" value="1"/>
</dbReference>
<dbReference type="Gene3D" id="2.70.210.12">
    <property type="entry name" value="GTP1/OBG domain"/>
    <property type="match status" value="1"/>
</dbReference>
<dbReference type="Gene3D" id="3.40.50.300">
    <property type="entry name" value="P-loop containing nucleotide triphosphate hydrolases"/>
    <property type="match status" value="1"/>
</dbReference>
<dbReference type="HAMAP" id="MF_01454">
    <property type="entry name" value="GTPase_Obg"/>
    <property type="match status" value="1"/>
</dbReference>
<dbReference type="InterPro" id="IPR031167">
    <property type="entry name" value="G_OBG"/>
</dbReference>
<dbReference type="InterPro" id="IPR006073">
    <property type="entry name" value="GTP-bd"/>
</dbReference>
<dbReference type="InterPro" id="IPR014100">
    <property type="entry name" value="GTP-bd_Obg/CgtA"/>
</dbReference>
<dbReference type="InterPro" id="IPR006074">
    <property type="entry name" value="GTP1-OBG_CS"/>
</dbReference>
<dbReference type="InterPro" id="IPR006169">
    <property type="entry name" value="GTP1_OBG_dom"/>
</dbReference>
<dbReference type="InterPro" id="IPR036726">
    <property type="entry name" value="GTP1_OBG_dom_sf"/>
</dbReference>
<dbReference type="InterPro" id="IPR045086">
    <property type="entry name" value="OBG_GTPase"/>
</dbReference>
<dbReference type="InterPro" id="IPR027417">
    <property type="entry name" value="P-loop_NTPase"/>
</dbReference>
<dbReference type="NCBIfam" id="TIGR02729">
    <property type="entry name" value="Obg_CgtA"/>
    <property type="match status" value="1"/>
</dbReference>
<dbReference type="NCBIfam" id="NF008955">
    <property type="entry name" value="PRK12297.1"/>
    <property type="match status" value="1"/>
</dbReference>
<dbReference type="NCBIfam" id="NF008956">
    <property type="entry name" value="PRK12299.1"/>
    <property type="match status" value="1"/>
</dbReference>
<dbReference type="PANTHER" id="PTHR11702">
    <property type="entry name" value="DEVELOPMENTALLY REGULATED GTP-BINDING PROTEIN-RELATED"/>
    <property type="match status" value="1"/>
</dbReference>
<dbReference type="PANTHER" id="PTHR11702:SF31">
    <property type="entry name" value="MITOCHONDRIAL RIBOSOME-ASSOCIATED GTPASE 2"/>
    <property type="match status" value="1"/>
</dbReference>
<dbReference type="Pfam" id="PF01018">
    <property type="entry name" value="GTP1_OBG"/>
    <property type="match status" value="1"/>
</dbReference>
<dbReference type="Pfam" id="PF01926">
    <property type="entry name" value="MMR_HSR1"/>
    <property type="match status" value="1"/>
</dbReference>
<dbReference type="PIRSF" id="PIRSF002401">
    <property type="entry name" value="GTP_bd_Obg/CgtA"/>
    <property type="match status" value="1"/>
</dbReference>
<dbReference type="PRINTS" id="PR00326">
    <property type="entry name" value="GTP1OBG"/>
</dbReference>
<dbReference type="SUPFAM" id="SSF82051">
    <property type="entry name" value="Obg GTP-binding protein N-terminal domain"/>
    <property type="match status" value="1"/>
</dbReference>
<dbReference type="SUPFAM" id="SSF52540">
    <property type="entry name" value="P-loop containing nucleoside triphosphate hydrolases"/>
    <property type="match status" value="1"/>
</dbReference>
<dbReference type="PROSITE" id="PS51710">
    <property type="entry name" value="G_OBG"/>
    <property type="match status" value="1"/>
</dbReference>
<dbReference type="PROSITE" id="PS00905">
    <property type="entry name" value="GTP1_OBG"/>
    <property type="match status" value="1"/>
</dbReference>
<dbReference type="PROSITE" id="PS51883">
    <property type="entry name" value="OBG"/>
    <property type="match status" value="1"/>
</dbReference>
<gene>
    <name evidence="1" type="primary">obg</name>
    <name type="ordered locus">ESA_03576</name>
</gene>
<sequence>MKFVDEATILVVAGDGGNGCVSFRREKYIPKGGPDGGDGGDGGDVWLEADENLNTLIDYRFEKSFRAERGQNGQSRDCTGKRGKDVTIKVPVGTRVIDQGTGETMGDMTKHGQRLMVAKGGWHGLGNTRFKSSVNRTPRQKTMGTPGEKRDLQLELMLLADVGMLGMPNAGKSTFIRAVSAAKPKVADYPFTTLVPSLGVVRMDNEKSFVVADIPGLIEGAAEGAGLGIRFLKHLERCRVLLHLIDLDPIDGSDPAENARIIVGELEKYSEKLASKPRWLVFNKIDLLSREEAEAKAKAIADALGWEEKYYLISAASQMNVKDLCWDVMHFIIENPVVHEEEAKQPEKVEFMWDDYHRQQLEEMEAEAEEEWDDDWDEDDDEGVEIVYQR</sequence>